<protein>
    <recommendedName>
        <fullName>Tiger protein D1</fullName>
    </recommendedName>
    <alternativeName>
        <fullName>Loose aggregate C2 protein</fullName>
    </alternativeName>
    <alternativeName>
        <fullName>Loose aggregate D1 protein</fullName>
    </alternativeName>
    <alternativeName>
        <fullName>Transmembrane, IPT, Ig, E-set, Repeat protein D1</fullName>
    </alternativeName>
</protein>
<gene>
    <name type="primary">tgrD1</name>
    <name type="synonym">lagC2</name>
    <name type="synonym">lagD</name>
    <name type="synonym">lagD1</name>
    <name type="ORF">DDB_G0286825</name>
</gene>
<evidence type="ECO:0000255" key="1"/>
<evidence type="ECO:0000269" key="2">
    <source>
    </source>
</evidence>
<evidence type="ECO:0000269" key="3">
    <source>
    </source>
</evidence>
<proteinExistence type="evidence at transcript level"/>
<organism>
    <name type="scientific">Dictyostelium discoideum</name>
    <name type="common">Social amoeba</name>
    <dbReference type="NCBI Taxonomy" id="44689"/>
    <lineage>
        <taxon>Eukaryota</taxon>
        <taxon>Amoebozoa</taxon>
        <taxon>Evosea</taxon>
        <taxon>Eumycetozoa</taxon>
        <taxon>Dictyostelia</taxon>
        <taxon>Dictyosteliales</taxon>
        <taxon>Dictyosteliaceae</taxon>
        <taxon>Dictyostelium</taxon>
    </lineage>
</organism>
<comment type="function">
    <text>May be involved in the regulation of aggregation. Activates tgrC1.</text>
</comment>
<comment type="subcellular location">
    <subcellularLocation>
        <location>Cell membrane</location>
        <topology>Single-pass type I membrane protein</topology>
        <orientation>Extracellular side</orientation>
    </subcellularLocation>
</comment>
<comment type="developmental stage">
    <text evidence="2 3">Developmentally regulated; with a peak of expression at 16 hours corresponding to the finger stage of development.</text>
</comment>
<comment type="disruption phenotype">
    <text evidence="2 3">Cells are unable to sporulate when in pure population although they will sporulate when in chimerae with wild-type cells. Cells form loose aggregate before disaggregating. Cells aggregate and disperse repeatedly. After starvation, cells completely fail to stream and display cAMP relay defects. Fail to rotate. comC-/tgrC1-/tgrD1- triple mutants fail to form spores.</text>
</comment>
<sequence>MIHKMYFFLILLFSLFIIVYSAPNRVTRNETSIVYTYSLDSDYYTRFVMYLNATTLRTDIAPNYFDCSQIVNSERYCVFHFADSFSRLWGAVYSRVCTRTVSDPTEDCQSTWITDNAFPEPLNVKFSGYPSTSGGDVVFTGLFLRLAGGPNTLANSFTNPSKTFLIKVHGNFSDPNFNCNNFTATFPPSSGYIKVYFDDTGKSSLQLRYASPTVSSFILDESKKLVTINGDNYFTKNSLVQVFFDGIIQNNINITVNHSQIQVNNFIRVDPGPMSVNITINAVSIDNNYTYCFPAVISSISSVSNHLGGVVTIKGSKLSSTSIIPTIKIGDKQCTFIKSTTTELECQLEPNETGGKHLPVDVNFGGCNSTSSGSDAVTFTYSIPTLSSGTLSNGIVTLIGTNLGTINDSFIQLNSNGAIDNVKNDQFNISSDETTATFKLPLLKCKSFYINFTRVDISANNKPSISAPLLIYVINKPTVSNGSINIELYYIDCPISPSSTPSITVGNSSSATQCSIPSLKNLSEYYQTTCSIPYGTGTNKQFKFKYNSEESNSEFSYEPPKVESRSFSKGLFNITINGNNFGNSTSLIKVYFNGSDISSEIQSLNDNQFTFKRLNSYENGPINITVDGNSNMEPSFYLTLPPVIYSIINKENKTIGCGGLITISGKNLLTSDDKFKVRVLANNENTTVIVPDEKTLIVRANNKDSPLFVSTLIGDDLGPNTTLTYFEPRITVIPTVKNKKDGISIRVGGVSLSGIINASLGISSENVSLSCDLQCSLSPNETFYLSNPILSSNEKDITNSTDCLSCHSMNSIVVDETSGVLYLQLGPTSYHYDVKIEEIQSSLNPSSSNGGERKSSKLSGGAIAGITIGCVAGAGALVGSVFYFKLITRVKKAFN</sequence>
<reference key="1">
    <citation type="journal article" date="2009" name="Curr. Biol.">
        <title>Polymorphic members of the lag gene family mediate kin discrimination in Dictyostelium.</title>
        <authorList>
            <person name="Benabentos R."/>
            <person name="Hirose S."/>
            <person name="Sucgang R."/>
            <person name="Curk T."/>
            <person name="Katoh M."/>
            <person name="Ostrowski E.A."/>
            <person name="Strassmann J.E."/>
            <person name="Queller D.C."/>
            <person name="Zupan B."/>
            <person name="Shaulsky G."/>
            <person name="Kuspa A."/>
        </authorList>
    </citation>
    <scope>NUCLEOTIDE SEQUENCE [GENOMIC DNA]</scope>
    <scope>DISRUPTION PHENOTYPE</scope>
    <scope>DEVELOPMENTAL STAGE</scope>
    <scope>VARIANTS ILE-27; VAL-247; LEU-359; ILE-424; ILE-455; ASN-591 AND GLN-892</scope>
    <source>
        <strain>QS11</strain>
        <strain>QS113</strain>
        <strain>QS15</strain>
        <strain>QS18</strain>
        <strain>QS21</strain>
        <strain>QS23</strain>
        <strain>QS32</strain>
        <strain>QS34</strain>
        <strain>QS36</strain>
        <strain>QS38</strain>
        <strain>QS4</strain>
        <strain>QS8</strain>
        <strain>QS9</strain>
    </source>
</reference>
<reference key="2">
    <citation type="submission" date="1999-09" db="EMBL/GenBank/DDBJ databases">
        <title>Developmental regulated gene.</title>
        <authorList>
            <person name="Takeda K."/>
            <person name="Saito T."/>
            <person name="Ochiai H."/>
        </authorList>
    </citation>
    <scope>NUCLEOTIDE SEQUENCE [MRNA]</scope>
    <source>
        <strain>AX3-1</strain>
    </source>
</reference>
<reference key="3">
    <citation type="journal article" date="2005" name="Nature">
        <title>The genome of the social amoeba Dictyostelium discoideum.</title>
        <authorList>
            <person name="Eichinger L."/>
            <person name="Pachebat J.A."/>
            <person name="Gloeckner G."/>
            <person name="Rajandream M.A."/>
            <person name="Sucgang R."/>
            <person name="Berriman M."/>
            <person name="Song J."/>
            <person name="Olsen R."/>
            <person name="Szafranski K."/>
            <person name="Xu Q."/>
            <person name="Tunggal B."/>
            <person name="Kummerfeld S."/>
            <person name="Madera M."/>
            <person name="Konfortov B.A."/>
            <person name="Rivero F."/>
            <person name="Bankier A.T."/>
            <person name="Lehmann R."/>
            <person name="Hamlin N."/>
            <person name="Davies R."/>
            <person name="Gaudet P."/>
            <person name="Fey P."/>
            <person name="Pilcher K."/>
            <person name="Chen G."/>
            <person name="Saunders D."/>
            <person name="Sodergren E.J."/>
            <person name="Davis P."/>
            <person name="Kerhornou A."/>
            <person name="Nie X."/>
            <person name="Hall N."/>
            <person name="Anjard C."/>
            <person name="Hemphill L."/>
            <person name="Bason N."/>
            <person name="Farbrother P."/>
            <person name="Desany B."/>
            <person name="Just E."/>
            <person name="Morio T."/>
            <person name="Rost R."/>
            <person name="Churcher C.M."/>
            <person name="Cooper J."/>
            <person name="Haydock S."/>
            <person name="van Driessche N."/>
            <person name="Cronin A."/>
            <person name="Goodhead I."/>
            <person name="Muzny D.M."/>
            <person name="Mourier T."/>
            <person name="Pain A."/>
            <person name="Lu M."/>
            <person name="Harper D."/>
            <person name="Lindsay R."/>
            <person name="Hauser H."/>
            <person name="James K.D."/>
            <person name="Quiles M."/>
            <person name="Madan Babu M."/>
            <person name="Saito T."/>
            <person name="Buchrieser C."/>
            <person name="Wardroper A."/>
            <person name="Felder M."/>
            <person name="Thangavelu M."/>
            <person name="Johnson D."/>
            <person name="Knights A."/>
            <person name="Loulseged H."/>
            <person name="Mungall K.L."/>
            <person name="Oliver K."/>
            <person name="Price C."/>
            <person name="Quail M.A."/>
            <person name="Urushihara H."/>
            <person name="Hernandez J."/>
            <person name="Rabbinowitsch E."/>
            <person name="Steffen D."/>
            <person name="Sanders M."/>
            <person name="Ma J."/>
            <person name="Kohara Y."/>
            <person name="Sharp S."/>
            <person name="Simmonds M.N."/>
            <person name="Spiegler S."/>
            <person name="Tivey A."/>
            <person name="Sugano S."/>
            <person name="White B."/>
            <person name="Walker D."/>
            <person name="Woodward J.R."/>
            <person name="Winckler T."/>
            <person name="Tanaka Y."/>
            <person name="Shaulsky G."/>
            <person name="Schleicher M."/>
            <person name="Weinstock G.M."/>
            <person name="Rosenthal A."/>
            <person name="Cox E.C."/>
            <person name="Chisholm R.L."/>
            <person name="Gibbs R.A."/>
            <person name="Loomis W.F."/>
            <person name="Platzer M."/>
            <person name="Kay R.R."/>
            <person name="Williams J.G."/>
            <person name="Dear P.H."/>
            <person name="Noegel A.A."/>
            <person name="Barrell B.G."/>
            <person name="Kuspa A."/>
        </authorList>
    </citation>
    <scope>NUCLEOTIDE SEQUENCE [LARGE SCALE GENOMIC DNA]</scope>
    <source>
        <strain>AX4</strain>
    </source>
</reference>
<reference key="4">
    <citation type="journal article" date="2003" name="Dev. Biol.">
        <title>A cell-adhesion pathway regulates intercellular communication during Dictyostelium development.</title>
        <authorList>
            <person name="Kibler K."/>
            <person name="Svetz J."/>
            <person name="Nguyen T.-L."/>
            <person name="Shaw C."/>
            <person name="Shaulsky G."/>
        </authorList>
    </citation>
    <scope>DEVELOPMENTAL STAGE</scope>
    <scope>DISRUPTION PHENOTYPE</scope>
</reference>
<keyword id="KW-1003">Cell membrane</keyword>
<keyword id="KW-0325">Glycoprotein</keyword>
<keyword id="KW-0472">Membrane</keyword>
<keyword id="KW-1185">Reference proteome</keyword>
<keyword id="KW-0677">Repeat</keyword>
<keyword id="KW-0732">Signal</keyword>
<keyword id="KW-0812">Transmembrane</keyword>
<keyword id="KW-1133">Transmembrane helix</keyword>
<accession>Q9U8Q1</accession>
<accession>C0JMQ2</accession>
<accession>C0JMQ3</accession>
<accession>C0JMQ4</accession>
<accession>C0JMQ5</accession>
<accession>C0JMQ6</accession>
<accession>C0JMQ7</accession>
<accession>C0JMQ8</accession>
<accession>C0JMQ9</accession>
<accession>C0JMR1</accession>
<accession>C0JMR2</accession>
<accession>C0JMR3</accession>
<accession>C0JMR4</accession>
<accession>C0JMR5</accession>
<accession>C0JMR6</accession>
<accession>Q54L74</accession>
<dbReference type="EMBL" id="FJ374953">
    <property type="protein sequence ID" value="ACN54212.1"/>
    <property type="molecule type" value="Genomic_DNA"/>
</dbReference>
<dbReference type="EMBL" id="FJ374954">
    <property type="protein sequence ID" value="ACN54213.1"/>
    <property type="molecule type" value="Genomic_DNA"/>
</dbReference>
<dbReference type="EMBL" id="FJ374955">
    <property type="protein sequence ID" value="ACN54214.1"/>
    <property type="molecule type" value="Genomic_DNA"/>
</dbReference>
<dbReference type="EMBL" id="FJ374956">
    <property type="protein sequence ID" value="ACN54215.1"/>
    <property type="molecule type" value="Genomic_DNA"/>
</dbReference>
<dbReference type="EMBL" id="FJ374957">
    <property type="protein sequence ID" value="ACN54216.1"/>
    <property type="molecule type" value="Genomic_DNA"/>
</dbReference>
<dbReference type="EMBL" id="FJ374958">
    <property type="protein sequence ID" value="ACN54217.1"/>
    <property type="molecule type" value="Genomic_DNA"/>
</dbReference>
<dbReference type="EMBL" id="FJ374959">
    <property type="protein sequence ID" value="ACN54218.1"/>
    <property type="molecule type" value="Genomic_DNA"/>
</dbReference>
<dbReference type="EMBL" id="FJ374960">
    <property type="protein sequence ID" value="ACN54219.1"/>
    <property type="molecule type" value="Genomic_DNA"/>
</dbReference>
<dbReference type="EMBL" id="FJ374961">
    <property type="protein sequence ID" value="ACN54220.1"/>
    <property type="molecule type" value="Genomic_DNA"/>
</dbReference>
<dbReference type="EMBL" id="FJ374962">
    <property type="protein sequence ID" value="ACN54221.1"/>
    <property type="molecule type" value="Genomic_DNA"/>
</dbReference>
<dbReference type="EMBL" id="FJ374963">
    <property type="protein sequence ID" value="ACN54222.1"/>
    <property type="molecule type" value="Genomic_DNA"/>
</dbReference>
<dbReference type="EMBL" id="FJ374964">
    <property type="protein sequence ID" value="ACN54223.1"/>
    <property type="molecule type" value="Genomic_DNA"/>
</dbReference>
<dbReference type="EMBL" id="FJ374965">
    <property type="protein sequence ID" value="ACN54224.1"/>
    <property type="molecule type" value="Genomic_DNA"/>
</dbReference>
<dbReference type="EMBL" id="FJ374966">
    <property type="protein sequence ID" value="ACN54225.1"/>
    <property type="molecule type" value="Genomic_DNA"/>
</dbReference>
<dbReference type="EMBL" id="FJ374967">
    <property type="protein sequence ID" value="ACN54226.1"/>
    <property type="molecule type" value="Genomic_DNA"/>
</dbReference>
<dbReference type="EMBL" id="AB032076">
    <property type="protein sequence ID" value="BAA84094.1"/>
    <property type="molecule type" value="mRNA"/>
</dbReference>
<dbReference type="EMBL" id="AAFI02000090">
    <property type="protein sequence ID" value="EAL64010.1"/>
    <property type="molecule type" value="Genomic_DNA"/>
</dbReference>
<dbReference type="RefSeq" id="XP_637529.1">
    <property type="nucleotide sequence ID" value="XM_632437.1"/>
</dbReference>
<dbReference type="FunCoup" id="Q9U8Q1">
    <property type="interactions" value="43"/>
</dbReference>
<dbReference type="STRING" id="44689.Q9U8Q1"/>
<dbReference type="GlyCosmos" id="Q9U8Q1">
    <property type="glycosylation" value="27 sites, No reported glycans"/>
</dbReference>
<dbReference type="GlyGen" id="Q9U8Q1">
    <property type="glycosylation" value="28 sites"/>
</dbReference>
<dbReference type="PaxDb" id="44689-DDB0191406"/>
<dbReference type="EnsemblProtists" id="EAL64010">
    <property type="protein sequence ID" value="EAL64010"/>
    <property type="gene ID" value="DDB_G0286825"/>
</dbReference>
<dbReference type="GeneID" id="8625827"/>
<dbReference type="KEGG" id="ddi:DDB_G0286825"/>
<dbReference type="dictyBase" id="DDB_G0286825">
    <property type="gene designation" value="tgrD1"/>
</dbReference>
<dbReference type="VEuPathDB" id="AmoebaDB:DDB_G0286825"/>
<dbReference type="eggNOG" id="ENOG502RHZ3">
    <property type="taxonomic scope" value="Eukaryota"/>
</dbReference>
<dbReference type="HOGENOM" id="CLU_325837_0_0_1"/>
<dbReference type="InParanoid" id="Q9U8Q1"/>
<dbReference type="PhylomeDB" id="Q9U8Q1"/>
<dbReference type="PRO" id="PR:Q9U8Q1"/>
<dbReference type="Proteomes" id="UP000002195">
    <property type="component" value="Chromosome 4"/>
</dbReference>
<dbReference type="GO" id="GO:0009897">
    <property type="term" value="C:external side of plasma membrane"/>
    <property type="evidence" value="ECO:0000318"/>
    <property type="project" value="GO_Central"/>
</dbReference>
<dbReference type="GO" id="GO:0005886">
    <property type="term" value="C:plasma membrane"/>
    <property type="evidence" value="ECO:0000304"/>
    <property type="project" value="dictyBase"/>
</dbReference>
<dbReference type="GO" id="GO:0031152">
    <property type="term" value="P:aggregation involved in sorocarp development"/>
    <property type="evidence" value="ECO:0000315"/>
    <property type="project" value="dictyBase"/>
</dbReference>
<dbReference type="GO" id="GO:0098742">
    <property type="term" value="P:cell-cell adhesion via plasma-membrane adhesion molecules"/>
    <property type="evidence" value="ECO:0000318"/>
    <property type="project" value="GO_Central"/>
</dbReference>
<dbReference type="CDD" id="cd00603">
    <property type="entry name" value="IPT_PCSR"/>
    <property type="match status" value="1"/>
</dbReference>
<dbReference type="Gene3D" id="2.60.40.10">
    <property type="entry name" value="Immunoglobulins"/>
    <property type="match status" value="2"/>
</dbReference>
<dbReference type="InterPro" id="IPR052014">
    <property type="entry name" value="Dictyostelium_Tiger"/>
</dbReference>
<dbReference type="InterPro" id="IPR013783">
    <property type="entry name" value="Ig-like_fold"/>
</dbReference>
<dbReference type="InterPro" id="IPR014756">
    <property type="entry name" value="Ig_E-set"/>
</dbReference>
<dbReference type="InterPro" id="IPR002909">
    <property type="entry name" value="IPT_dom"/>
</dbReference>
<dbReference type="PANTHER" id="PTHR31341">
    <property type="entry name" value="IPT/TIG DOMAIN-CONTAINING PROTEIN-RELATED-RELATED"/>
    <property type="match status" value="1"/>
</dbReference>
<dbReference type="PANTHER" id="PTHR31341:SF4">
    <property type="entry name" value="IPT_TIG DOMAIN-CONTAINING PROTEIN-RELATED"/>
    <property type="match status" value="1"/>
</dbReference>
<dbReference type="Pfam" id="PF24612">
    <property type="entry name" value="Ig_TgrO1"/>
    <property type="match status" value="2"/>
</dbReference>
<dbReference type="Pfam" id="PF01833">
    <property type="entry name" value="TIG"/>
    <property type="match status" value="3"/>
</dbReference>
<dbReference type="SUPFAM" id="SSF81296">
    <property type="entry name" value="E set domains"/>
    <property type="match status" value="3"/>
</dbReference>
<feature type="signal peptide" evidence="1">
    <location>
        <begin position="1"/>
        <end position="21"/>
    </location>
</feature>
<feature type="chain" id="PRO_0000390621" description="Tiger protein D1">
    <location>
        <begin position="22"/>
        <end position="895"/>
    </location>
</feature>
<feature type="topological domain" description="Extracellular" evidence="1">
    <location>
        <begin position="22"/>
        <end position="861"/>
    </location>
</feature>
<feature type="transmembrane region" description="Helical" evidence="1">
    <location>
        <begin position="862"/>
        <end position="882"/>
    </location>
</feature>
<feature type="topological domain" description="Cytoplasmic" evidence="1">
    <location>
        <begin position="883"/>
        <end position="895"/>
    </location>
</feature>
<feature type="domain" description="IPT/TIG 1">
    <location>
        <begin position="295"/>
        <end position="381"/>
    </location>
</feature>
<feature type="domain" description="IPT/TIG 2">
    <location>
        <begin position="560"/>
        <end position="638"/>
    </location>
</feature>
<feature type="domain" description="IPT/TIG 3">
    <location>
        <begin position="642"/>
        <end position="725"/>
    </location>
</feature>
<feature type="glycosylation site" description="N-linked (GlcNAc...) asparagine" evidence="1">
    <location>
        <position position="29"/>
    </location>
</feature>
<feature type="glycosylation site" description="N-linked (GlcNAc...) asparagine" evidence="1">
    <location>
        <position position="52"/>
    </location>
</feature>
<feature type="glycosylation site" description="N-linked (GlcNAc...) asparagine" evidence="1">
    <location>
        <position position="171"/>
    </location>
</feature>
<feature type="glycosylation site" description="N-linked (GlcNAc...) asparagine" evidence="1">
    <location>
        <position position="181"/>
    </location>
</feature>
<feature type="glycosylation site" description="N-linked (GlcNAc...) asparagine" evidence="1">
    <location>
        <position position="253"/>
    </location>
</feature>
<feature type="glycosylation site" description="N-linked (GlcNAc...) asparagine" evidence="1">
    <location>
        <position position="257"/>
    </location>
</feature>
<feature type="glycosylation site" description="N-linked (GlcNAc...) asparagine" evidence="1">
    <location>
        <position position="277"/>
    </location>
</feature>
<feature type="glycosylation site" description="N-linked (GlcNAc...) asparagine" evidence="1">
    <location>
        <position position="288"/>
    </location>
</feature>
<feature type="glycosylation site" description="N-linked (GlcNAc...) asparagine" evidence="1">
    <location>
        <position position="351"/>
    </location>
</feature>
<feature type="glycosylation site" description="N-linked (GlcNAc...) asparagine" evidence="1">
    <location>
        <position position="368"/>
    </location>
</feature>
<feature type="glycosylation site" description="N-linked (GlcNAc...) asparagine" evidence="1">
    <location>
        <position position="407"/>
    </location>
</feature>
<feature type="glycosylation site" description="N-linked (GlcNAc...) asparagine" evidence="1">
    <location>
        <position position="428"/>
    </location>
</feature>
<feature type="glycosylation site" description="N-linked (GlcNAc...) asparagine" evidence="1">
    <location>
        <position position="451"/>
    </location>
</feature>
<feature type="glycosylation site" description="N-linked (GlcNAc...) asparagine" evidence="1">
    <location>
        <position position="481"/>
    </location>
</feature>
<feature type="glycosylation site" description="N-linked (GlcNAc...) asparagine" evidence="1">
    <location>
        <position position="507"/>
    </location>
</feature>
<feature type="glycosylation site" description="N-linked (GlcNAc...) asparagine" evidence="1">
    <location>
        <position position="521"/>
    </location>
</feature>
<feature type="glycosylation site" description="N-linked (GlcNAc...) asparagine" evidence="1">
    <location>
        <position position="573"/>
    </location>
</feature>
<feature type="glycosylation site" description="N-linked (GlcNAc...) asparagine" evidence="1">
    <location>
        <position position="583"/>
    </location>
</feature>
<feature type="glycosylation site" description="N-linked (GlcNAc...) asparagine" evidence="1">
    <location>
        <position position="593"/>
    </location>
</feature>
<feature type="glycosylation site" description="N-linked (GlcNAc...) asparagine" evidence="1">
    <location>
        <position position="623"/>
    </location>
</feature>
<feature type="glycosylation site" description="N-linked (GlcNAc...) asparagine" evidence="1">
    <location>
        <position position="652"/>
    </location>
</feature>
<feature type="glycosylation site" description="N-linked (GlcNAc...) asparagine" evidence="1">
    <location>
        <position position="685"/>
    </location>
</feature>
<feature type="glycosylation site" description="N-linked (GlcNAc...) asparagine" evidence="1">
    <location>
        <position position="720"/>
    </location>
</feature>
<feature type="glycosylation site" description="N-linked (GlcNAc...) asparagine" evidence="1">
    <location>
        <position position="757"/>
    </location>
</feature>
<feature type="glycosylation site" description="N-linked (GlcNAc...) asparagine" evidence="1">
    <location>
        <position position="766"/>
    </location>
</feature>
<feature type="glycosylation site" description="N-linked (GlcNAc...) asparagine" evidence="1">
    <location>
        <position position="780"/>
    </location>
</feature>
<feature type="glycosylation site" description="N-linked (GlcNAc...) asparagine" evidence="1">
    <location>
        <position position="799"/>
    </location>
</feature>
<feature type="sequence variant" description="In strain: QS4, QS8, QS9, QS11, QS15, QS18, QS21, QS23, QS32, QS34, QS36, QS38 and QS113." evidence="3">
    <original>T</original>
    <variation>I</variation>
    <location>
        <position position="27"/>
    </location>
</feature>
<feature type="sequence variant" description="In strain: QS4, QS8, QS9, QS11, QS15, QS18, QS21, QS23, QS32, QS34, QS36, QS38 and QS113." evidence="3">
    <original>I</original>
    <variation>V</variation>
    <location>
        <position position="247"/>
    </location>
</feature>
<feature type="sequence variant" description="In strain: QS113." evidence="3">
    <original>P</original>
    <variation>L</variation>
    <location>
        <position position="359"/>
    </location>
</feature>
<feature type="sequence variant" description="In strain: QS23." evidence="3">
    <original>N</original>
    <variation>I</variation>
    <location>
        <position position="424"/>
    </location>
</feature>
<feature type="sequence variant" description="In strain: QS8, QS9, QS11, QS15, QS21 and QS34." evidence="3">
    <original>V</original>
    <variation>I</variation>
    <location>
        <position position="455"/>
    </location>
</feature>
<feature type="sequence variant" description="In strain: QS8, QS9, QS11, QS15, QS21 and QS34." evidence="3">
    <original>Y</original>
    <variation>N</variation>
    <location>
        <position position="591"/>
    </location>
</feature>
<feature type="sequence variant" description="In strain: QS4, QS21, QS23, QS32, QS34 and QS113." evidence="3">
    <original>K</original>
    <variation>Q</variation>
    <location>
        <position position="892"/>
    </location>
</feature>
<name>TGRD1_DICDI</name>